<keyword id="KW-0067">ATP-binding</keyword>
<keyword id="KW-0963">Cytoplasm</keyword>
<keyword id="KW-0418">Kinase</keyword>
<keyword id="KW-0547">Nucleotide-binding</keyword>
<keyword id="KW-1185">Reference proteome</keyword>
<keyword id="KW-0808">Transferase</keyword>
<accession>Q8G813</accession>
<evidence type="ECO:0000255" key="1">
    <source>
        <dbReference type="HAMAP-Rule" id="MF_00328"/>
    </source>
</evidence>
<sequence length="196" mass="21492">MTENTHAGRLIVLTGPTAVGKGTVEAKLRADHPEVWVSVSATTRAPRPGEVDGVNYWFLTEDEFLAREAAGEFLETAVVHGMAHYGTLLKPVEEHLAAGVPTILEIDLQGARRVKQRAAELDLEVVYVFIAPPSFEELERRLIGRGTETAEQQARRLETAKVELAAESEFDVTIVNETVDQAAADLWSVIAKEYGL</sequence>
<gene>
    <name evidence="1" type="primary">gmk</name>
    <name type="ordered locus">BL0070</name>
</gene>
<reference key="1">
    <citation type="journal article" date="2002" name="Proc. Natl. Acad. Sci. U.S.A.">
        <title>The genome sequence of Bifidobacterium longum reflects its adaptation to the human gastrointestinal tract.</title>
        <authorList>
            <person name="Schell M.A."/>
            <person name="Karmirantzou M."/>
            <person name="Snel B."/>
            <person name="Vilanova D."/>
            <person name="Berger B."/>
            <person name="Pessi G."/>
            <person name="Zwahlen M.-C."/>
            <person name="Desiere F."/>
            <person name="Bork P."/>
            <person name="Delley M."/>
            <person name="Pridmore R.D."/>
            <person name="Arigoni F."/>
        </authorList>
    </citation>
    <scope>NUCLEOTIDE SEQUENCE [LARGE SCALE GENOMIC DNA]</scope>
    <source>
        <strain>NCC 2705</strain>
    </source>
</reference>
<dbReference type="EC" id="2.7.4.8" evidence="1"/>
<dbReference type="EMBL" id="AE014295">
    <property type="protein sequence ID" value="AAN23936.1"/>
    <property type="molecule type" value="Genomic_DNA"/>
</dbReference>
<dbReference type="RefSeq" id="NP_695300.1">
    <property type="nucleotide sequence ID" value="NC_004307.2"/>
</dbReference>
<dbReference type="RefSeq" id="WP_007053267.1">
    <property type="nucleotide sequence ID" value="NC_004307.2"/>
</dbReference>
<dbReference type="SMR" id="Q8G813"/>
<dbReference type="STRING" id="206672.BL0070"/>
<dbReference type="EnsemblBacteria" id="AAN23936">
    <property type="protein sequence ID" value="AAN23936"/>
    <property type="gene ID" value="BL0070"/>
</dbReference>
<dbReference type="GeneID" id="69578597"/>
<dbReference type="KEGG" id="blo:BL0070"/>
<dbReference type="PATRIC" id="fig|206672.9.peg.76"/>
<dbReference type="HOGENOM" id="CLU_001715_1_1_11"/>
<dbReference type="OrthoDB" id="9808150at2"/>
<dbReference type="PhylomeDB" id="Q8G813"/>
<dbReference type="Proteomes" id="UP000000439">
    <property type="component" value="Chromosome"/>
</dbReference>
<dbReference type="GO" id="GO:0005829">
    <property type="term" value="C:cytosol"/>
    <property type="evidence" value="ECO:0007669"/>
    <property type="project" value="TreeGrafter"/>
</dbReference>
<dbReference type="GO" id="GO:0005524">
    <property type="term" value="F:ATP binding"/>
    <property type="evidence" value="ECO:0007669"/>
    <property type="project" value="UniProtKB-UniRule"/>
</dbReference>
<dbReference type="GO" id="GO:0004385">
    <property type="term" value="F:guanylate kinase activity"/>
    <property type="evidence" value="ECO:0007669"/>
    <property type="project" value="UniProtKB-UniRule"/>
</dbReference>
<dbReference type="CDD" id="cd00071">
    <property type="entry name" value="GMPK"/>
    <property type="match status" value="1"/>
</dbReference>
<dbReference type="FunFam" id="3.30.63.10:FF:000002">
    <property type="entry name" value="Guanylate kinase 1"/>
    <property type="match status" value="1"/>
</dbReference>
<dbReference type="Gene3D" id="3.30.63.10">
    <property type="entry name" value="Guanylate Kinase phosphate binding domain"/>
    <property type="match status" value="1"/>
</dbReference>
<dbReference type="Gene3D" id="3.40.50.300">
    <property type="entry name" value="P-loop containing nucleotide triphosphate hydrolases"/>
    <property type="match status" value="1"/>
</dbReference>
<dbReference type="HAMAP" id="MF_00328">
    <property type="entry name" value="Guanylate_kinase"/>
    <property type="match status" value="1"/>
</dbReference>
<dbReference type="InterPro" id="IPR008145">
    <property type="entry name" value="GK/Ca_channel_bsu"/>
</dbReference>
<dbReference type="InterPro" id="IPR008144">
    <property type="entry name" value="Guanylate_kin-like_dom"/>
</dbReference>
<dbReference type="InterPro" id="IPR017665">
    <property type="entry name" value="Guanylate_kinase"/>
</dbReference>
<dbReference type="InterPro" id="IPR020590">
    <property type="entry name" value="Guanylate_kinase_CS"/>
</dbReference>
<dbReference type="InterPro" id="IPR027417">
    <property type="entry name" value="P-loop_NTPase"/>
</dbReference>
<dbReference type="NCBIfam" id="TIGR03263">
    <property type="entry name" value="guanyl_kin"/>
    <property type="match status" value="1"/>
</dbReference>
<dbReference type="PANTHER" id="PTHR23117:SF13">
    <property type="entry name" value="GUANYLATE KINASE"/>
    <property type="match status" value="1"/>
</dbReference>
<dbReference type="PANTHER" id="PTHR23117">
    <property type="entry name" value="GUANYLATE KINASE-RELATED"/>
    <property type="match status" value="1"/>
</dbReference>
<dbReference type="Pfam" id="PF00625">
    <property type="entry name" value="Guanylate_kin"/>
    <property type="match status" value="1"/>
</dbReference>
<dbReference type="SMART" id="SM00072">
    <property type="entry name" value="GuKc"/>
    <property type="match status" value="1"/>
</dbReference>
<dbReference type="SUPFAM" id="SSF52540">
    <property type="entry name" value="P-loop containing nucleoside triphosphate hydrolases"/>
    <property type="match status" value="1"/>
</dbReference>
<dbReference type="PROSITE" id="PS00856">
    <property type="entry name" value="GUANYLATE_KINASE_1"/>
    <property type="match status" value="1"/>
</dbReference>
<dbReference type="PROSITE" id="PS50052">
    <property type="entry name" value="GUANYLATE_KINASE_2"/>
    <property type="match status" value="1"/>
</dbReference>
<comment type="function">
    <text evidence="1">Essential for recycling GMP and indirectly, cGMP.</text>
</comment>
<comment type="catalytic activity">
    <reaction evidence="1">
        <text>GMP + ATP = GDP + ADP</text>
        <dbReference type="Rhea" id="RHEA:20780"/>
        <dbReference type="ChEBI" id="CHEBI:30616"/>
        <dbReference type="ChEBI" id="CHEBI:58115"/>
        <dbReference type="ChEBI" id="CHEBI:58189"/>
        <dbReference type="ChEBI" id="CHEBI:456216"/>
        <dbReference type="EC" id="2.7.4.8"/>
    </reaction>
</comment>
<comment type="subcellular location">
    <subcellularLocation>
        <location evidence="1">Cytoplasm</location>
    </subcellularLocation>
</comment>
<comment type="similarity">
    <text evidence="1">Belongs to the guanylate kinase family.</text>
</comment>
<name>KGUA_BIFLO</name>
<feature type="chain" id="PRO_0000170503" description="Guanylate kinase">
    <location>
        <begin position="1"/>
        <end position="196"/>
    </location>
</feature>
<feature type="domain" description="Guanylate kinase-like" evidence="1">
    <location>
        <begin position="8"/>
        <end position="191"/>
    </location>
</feature>
<feature type="binding site" evidence="1">
    <location>
        <begin position="15"/>
        <end position="22"/>
    </location>
    <ligand>
        <name>ATP</name>
        <dbReference type="ChEBI" id="CHEBI:30616"/>
    </ligand>
</feature>
<protein>
    <recommendedName>
        <fullName evidence="1">Guanylate kinase</fullName>
        <ecNumber evidence="1">2.7.4.8</ecNumber>
    </recommendedName>
    <alternativeName>
        <fullName evidence="1">GMP kinase</fullName>
    </alternativeName>
</protein>
<proteinExistence type="inferred from homology"/>
<organism>
    <name type="scientific">Bifidobacterium longum (strain NCC 2705)</name>
    <dbReference type="NCBI Taxonomy" id="206672"/>
    <lineage>
        <taxon>Bacteria</taxon>
        <taxon>Bacillati</taxon>
        <taxon>Actinomycetota</taxon>
        <taxon>Actinomycetes</taxon>
        <taxon>Bifidobacteriales</taxon>
        <taxon>Bifidobacteriaceae</taxon>
        <taxon>Bifidobacterium</taxon>
    </lineage>
</organism>